<name>ATG23_DEBHA</name>
<organism>
    <name type="scientific">Debaryomyces hansenii (strain ATCC 36239 / CBS 767 / BCRC 21394 / JCM 1990 / NBRC 0083 / IGC 2968)</name>
    <name type="common">Yeast</name>
    <name type="synonym">Torulaspora hansenii</name>
    <dbReference type="NCBI Taxonomy" id="284592"/>
    <lineage>
        <taxon>Eukaryota</taxon>
        <taxon>Fungi</taxon>
        <taxon>Dikarya</taxon>
        <taxon>Ascomycota</taxon>
        <taxon>Saccharomycotina</taxon>
        <taxon>Pichiomycetes</taxon>
        <taxon>Debaryomycetaceae</taxon>
        <taxon>Debaryomyces</taxon>
    </lineage>
</organism>
<feature type="chain" id="PRO_0000064725" description="Autophagy-related protein 23">
    <location>
        <begin position="1"/>
        <end position="905"/>
    </location>
</feature>
<feature type="region of interest" description="Disordered" evidence="3">
    <location>
        <begin position="18"/>
        <end position="200"/>
    </location>
</feature>
<feature type="region of interest" description="Disordered" evidence="3">
    <location>
        <begin position="879"/>
        <end position="905"/>
    </location>
</feature>
<feature type="coiled-coil region" evidence="2">
    <location>
        <begin position="400"/>
        <end position="810"/>
    </location>
</feature>
<feature type="coiled-coil region" evidence="2">
    <location>
        <begin position="844"/>
        <end position="882"/>
    </location>
</feature>
<feature type="compositionally biased region" description="Basic and acidic residues" evidence="3">
    <location>
        <begin position="99"/>
        <end position="113"/>
    </location>
</feature>
<feature type="compositionally biased region" description="Polar residues" evidence="3">
    <location>
        <begin position="119"/>
        <end position="174"/>
    </location>
</feature>
<feature type="compositionally biased region" description="Low complexity" evidence="3">
    <location>
        <begin position="178"/>
        <end position="187"/>
    </location>
</feature>
<feature type="compositionally biased region" description="Basic residues" evidence="3">
    <location>
        <begin position="888"/>
        <end position="905"/>
    </location>
</feature>
<comment type="function">
    <text evidence="1">Required for cytoplasm to vacuole transport (Cvt) vesicle formation and efficient autophagy. Plays a role in ATG protein retrieval from the pre-autophagosomal structure (PAS) and is especially required for autophagy-dependent cycling of ATG9. Also plays a role in regulation of filamentous growth (By similarity).</text>
</comment>
<comment type="subcellular location">
    <subcellularLocation>
        <location evidence="1">Cytoplasm</location>
    </subcellularLocation>
    <subcellularLocation>
        <location evidence="1">Membrane</location>
        <topology evidence="1">Peripheral membrane protein</topology>
    </subcellularLocation>
</comment>
<comment type="similarity">
    <text evidence="4">Belongs to the ATG23 family.</text>
</comment>
<evidence type="ECO:0000250" key="1"/>
<evidence type="ECO:0000255" key="2"/>
<evidence type="ECO:0000256" key="3">
    <source>
        <dbReference type="SAM" id="MobiDB-lite"/>
    </source>
</evidence>
<evidence type="ECO:0000305" key="4"/>
<gene>
    <name type="primary">ATG23</name>
    <name type="ordered locus">DEHA2G18942g</name>
</gene>
<proteinExistence type="inferred from homology"/>
<dbReference type="EMBL" id="CR382139">
    <property type="protein sequence ID" value="CAR65998.1"/>
    <property type="molecule type" value="Genomic_DNA"/>
</dbReference>
<dbReference type="RefSeq" id="XP_002770666.1">
    <property type="nucleotide sequence ID" value="XM_002770620.1"/>
</dbReference>
<dbReference type="SMR" id="Q6BHF8"/>
<dbReference type="STRING" id="284592.Q6BHF8"/>
<dbReference type="GeneID" id="8999249"/>
<dbReference type="KEGG" id="dha:DEHA2G18942g"/>
<dbReference type="VEuPathDB" id="FungiDB:DEHA2G18942g"/>
<dbReference type="eggNOG" id="ENOG502QV33">
    <property type="taxonomic scope" value="Eukaryota"/>
</dbReference>
<dbReference type="HOGENOM" id="CLU_346116_0_0_1"/>
<dbReference type="InParanoid" id="Q6BHF8"/>
<dbReference type="OMA" id="NFLMSPN"/>
<dbReference type="OrthoDB" id="5367584at2759"/>
<dbReference type="Proteomes" id="UP000000599">
    <property type="component" value="Chromosome G"/>
</dbReference>
<dbReference type="GO" id="GO:0005737">
    <property type="term" value="C:cytoplasm"/>
    <property type="evidence" value="ECO:0007669"/>
    <property type="project" value="UniProtKB-SubCell"/>
</dbReference>
<dbReference type="GO" id="GO:0016020">
    <property type="term" value="C:membrane"/>
    <property type="evidence" value="ECO:0007669"/>
    <property type="project" value="UniProtKB-SubCell"/>
</dbReference>
<dbReference type="GO" id="GO:0006914">
    <property type="term" value="P:autophagy"/>
    <property type="evidence" value="ECO:0007669"/>
    <property type="project" value="UniProtKB-KW"/>
</dbReference>
<dbReference type="GO" id="GO:0015031">
    <property type="term" value="P:protein transport"/>
    <property type="evidence" value="ECO:0007669"/>
    <property type="project" value="UniProtKB-KW"/>
</dbReference>
<dbReference type="Gene3D" id="1.10.287.1490">
    <property type="match status" value="1"/>
</dbReference>
<dbReference type="InterPro" id="IPR024312">
    <property type="entry name" value="TACC_fungi"/>
</dbReference>
<dbReference type="Pfam" id="PF12709">
    <property type="entry name" value="Fungal_TACC"/>
    <property type="match status" value="1"/>
</dbReference>
<dbReference type="SUPFAM" id="SSF90257">
    <property type="entry name" value="Myosin rod fragments"/>
    <property type="match status" value="1"/>
</dbReference>
<reference key="1">
    <citation type="journal article" date="2004" name="Nature">
        <title>Genome evolution in yeasts.</title>
        <authorList>
            <person name="Dujon B."/>
            <person name="Sherman D."/>
            <person name="Fischer G."/>
            <person name="Durrens P."/>
            <person name="Casaregola S."/>
            <person name="Lafontaine I."/>
            <person name="de Montigny J."/>
            <person name="Marck C."/>
            <person name="Neuveglise C."/>
            <person name="Talla E."/>
            <person name="Goffard N."/>
            <person name="Frangeul L."/>
            <person name="Aigle M."/>
            <person name="Anthouard V."/>
            <person name="Babour A."/>
            <person name="Barbe V."/>
            <person name="Barnay S."/>
            <person name="Blanchin S."/>
            <person name="Beckerich J.-M."/>
            <person name="Beyne E."/>
            <person name="Bleykasten C."/>
            <person name="Boisrame A."/>
            <person name="Boyer J."/>
            <person name="Cattolico L."/>
            <person name="Confanioleri F."/>
            <person name="de Daruvar A."/>
            <person name="Despons L."/>
            <person name="Fabre E."/>
            <person name="Fairhead C."/>
            <person name="Ferry-Dumazet H."/>
            <person name="Groppi A."/>
            <person name="Hantraye F."/>
            <person name="Hennequin C."/>
            <person name="Jauniaux N."/>
            <person name="Joyet P."/>
            <person name="Kachouri R."/>
            <person name="Kerrest A."/>
            <person name="Koszul R."/>
            <person name="Lemaire M."/>
            <person name="Lesur I."/>
            <person name="Ma L."/>
            <person name="Muller H."/>
            <person name="Nicaud J.-M."/>
            <person name="Nikolski M."/>
            <person name="Oztas S."/>
            <person name="Ozier-Kalogeropoulos O."/>
            <person name="Pellenz S."/>
            <person name="Potier S."/>
            <person name="Richard G.-F."/>
            <person name="Straub M.-L."/>
            <person name="Suleau A."/>
            <person name="Swennen D."/>
            <person name="Tekaia F."/>
            <person name="Wesolowski-Louvel M."/>
            <person name="Westhof E."/>
            <person name="Wirth B."/>
            <person name="Zeniou-Meyer M."/>
            <person name="Zivanovic Y."/>
            <person name="Bolotin-Fukuhara M."/>
            <person name="Thierry A."/>
            <person name="Bouchier C."/>
            <person name="Caudron B."/>
            <person name="Scarpelli C."/>
            <person name="Gaillardin C."/>
            <person name="Weissenbach J."/>
            <person name="Wincker P."/>
            <person name="Souciet J.-L."/>
        </authorList>
    </citation>
    <scope>NUCLEOTIDE SEQUENCE [LARGE SCALE GENOMIC DNA]</scope>
    <source>
        <strain>ATCC 36239 / CBS 767 / BCRC 21394 / JCM 1990 / NBRC 0083 / IGC 2968</strain>
    </source>
</reference>
<accession>Q6BHF8</accession>
<accession>B5RUV4</accession>
<protein>
    <recommendedName>
        <fullName>Autophagy-related protein 23</fullName>
    </recommendedName>
</protein>
<sequence>MTSPLRFEADMSMIEGEKLSPIKIPPSRLSTNTTSPDILAKHPHGLSAKQDARRNTVHNETPKGLTATPLTKKAEPLYSVNKRIPLTSPRATNQPNLDSLKKSKTKLDARLYELKSSSRHGSPSNKENMHNSGKSTQASQLSSDVNSSISHKSPFESSPSKIDTPIKQINSSFAKNVKSSPPKSSPSKADKRSIEDDSVIENSRKIAKVITNANESEVSHHKSDDEHSIQIDQVFNKEDLVGRFSSGASPAKLHEPTVIDEDSDGDIYNNEVNTSHTMTSKMRGNESTQLSRIIKITDEVDYVTPQRYTEPVAKSPEINQQHRIKENVINNTESKETISPLKNHMLSVNSDQKENHVSSNRMEDENSDGFNELEDEPTINFLLSPNSKPVFSLDHIKKVQDDHFKEVANLEEVINNKNQEILKFSEELSATNNKFLIYDQKIKELKQDKKKLIANENLLLIQLKHNERELASMTKALRIKENTVTQLESRLSKSKSKYESTANELESVIEEGNTLREQIKRLEKSVEDKSISQKEYESQIKILNDEIKEKDTEISSLTDANIDYNIKVENLLSEKEELLTETGRLGRENNGLEEINSKQQELLEELDKLENLAKDKIMTLENTLDSKTQEIKQVMTEKNELLTKIDNLTEENKNSGRELQQYKDDVEELTNKLNNYNNARSDLDDKINRLQEGLNKSNEANESLQNKVSGLLEEIERLNQHVSESETQMDLLKSINTEKDEIISGDTKKMGELVQKVNKQKQVIADYEKDYSKALEDIKSLQSKGENTSLNDEIEDLKKQVSQGQAKTNARIQEVAEQLYFEYSKKHELKVNQVRASFKKQIDNLHFEKKSQARDIDSLQKKLEIVNMEKNQLLRLIDEYQSGSDHNPKKKLSPKKSGIKKPSRY</sequence>
<keyword id="KW-0072">Autophagy</keyword>
<keyword id="KW-0175">Coiled coil</keyword>
<keyword id="KW-0963">Cytoplasm</keyword>
<keyword id="KW-0472">Membrane</keyword>
<keyword id="KW-0653">Protein transport</keyword>
<keyword id="KW-1185">Reference proteome</keyword>
<keyword id="KW-0813">Transport</keyword>